<name>YHGD_BACSU</name>
<reference key="1">
    <citation type="journal article" date="1992" name="J. Bacteriol.">
        <title>Cloning and characterization of the Bacillus subtilis hemEHY gene cluster, which encodes protoheme IX biosynthetic enzymes.</title>
        <authorList>
            <person name="Hansson M."/>
            <person name="Hederstedt L."/>
        </authorList>
    </citation>
    <scope>NUCLEOTIDE SEQUENCE [GENOMIC DNA]</scope>
</reference>
<reference key="2">
    <citation type="journal article" date="1998" name="Microbiology">
        <title>The 172 kb prkA-addAB region from 83 degrees to 97 degrees of the Bacillus subtilis chromosome contains several dysfunctional genes, the glyB marker, many genes encoding transporter proteins, and the ubiquitous hit gene.</title>
        <authorList>
            <person name="Noback M.A."/>
            <person name="Holsappel S."/>
            <person name="Kiewiet R."/>
            <person name="Terpstra P."/>
            <person name="Wambutt R."/>
            <person name="Wedler H."/>
            <person name="Venema G."/>
            <person name="Bron S."/>
        </authorList>
    </citation>
    <scope>NUCLEOTIDE SEQUENCE [GENOMIC DNA]</scope>
    <source>
        <strain>168</strain>
    </source>
</reference>
<reference key="3">
    <citation type="journal article" date="1997" name="Nature">
        <title>The complete genome sequence of the Gram-positive bacterium Bacillus subtilis.</title>
        <authorList>
            <person name="Kunst F."/>
            <person name="Ogasawara N."/>
            <person name="Moszer I."/>
            <person name="Albertini A.M."/>
            <person name="Alloni G."/>
            <person name="Azevedo V."/>
            <person name="Bertero M.G."/>
            <person name="Bessieres P."/>
            <person name="Bolotin A."/>
            <person name="Borchert S."/>
            <person name="Borriss R."/>
            <person name="Boursier L."/>
            <person name="Brans A."/>
            <person name="Braun M."/>
            <person name="Brignell S.C."/>
            <person name="Bron S."/>
            <person name="Brouillet S."/>
            <person name="Bruschi C.V."/>
            <person name="Caldwell B."/>
            <person name="Capuano V."/>
            <person name="Carter N.M."/>
            <person name="Choi S.-K."/>
            <person name="Codani J.-J."/>
            <person name="Connerton I.F."/>
            <person name="Cummings N.J."/>
            <person name="Daniel R.A."/>
            <person name="Denizot F."/>
            <person name="Devine K.M."/>
            <person name="Duesterhoeft A."/>
            <person name="Ehrlich S.D."/>
            <person name="Emmerson P.T."/>
            <person name="Entian K.-D."/>
            <person name="Errington J."/>
            <person name="Fabret C."/>
            <person name="Ferrari E."/>
            <person name="Foulger D."/>
            <person name="Fritz C."/>
            <person name="Fujita M."/>
            <person name="Fujita Y."/>
            <person name="Fuma S."/>
            <person name="Galizzi A."/>
            <person name="Galleron N."/>
            <person name="Ghim S.-Y."/>
            <person name="Glaser P."/>
            <person name="Goffeau A."/>
            <person name="Golightly E.J."/>
            <person name="Grandi G."/>
            <person name="Guiseppi G."/>
            <person name="Guy B.J."/>
            <person name="Haga K."/>
            <person name="Haiech J."/>
            <person name="Harwood C.R."/>
            <person name="Henaut A."/>
            <person name="Hilbert H."/>
            <person name="Holsappel S."/>
            <person name="Hosono S."/>
            <person name="Hullo M.-F."/>
            <person name="Itaya M."/>
            <person name="Jones L.-M."/>
            <person name="Joris B."/>
            <person name="Karamata D."/>
            <person name="Kasahara Y."/>
            <person name="Klaerr-Blanchard M."/>
            <person name="Klein C."/>
            <person name="Kobayashi Y."/>
            <person name="Koetter P."/>
            <person name="Koningstein G."/>
            <person name="Krogh S."/>
            <person name="Kumano M."/>
            <person name="Kurita K."/>
            <person name="Lapidus A."/>
            <person name="Lardinois S."/>
            <person name="Lauber J."/>
            <person name="Lazarevic V."/>
            <person name="Lee S.-M."/>
            <person name="Levine A."/>
            <person name="Liu H."/>
            <person name="Masuda S."/>
            <person name="Mauel C."/>
            <person name="Medigue C."/>
            <person name="Medina N."/>
            <person name="Mellado R.P."/>
            <person name="Mizuno M."/>
            <person name="Moestl D."/>
            <person name="Nakai S."/>
            <person name="Noback M."/>
            <person name="Noone D."/>
            <person name="O'Reilly M."/>
            <person name="Ogawa K."/>
            <person name="Ogiwara A."/>
            <person name="Oudega B."/>
            <person name="Park S.-H."/>
            <person name="Parro V."/>
            <person name="Pohl T.M."/>
            <person name="Portetelle D."/>
            <person name="Porwollik S."/>
            <person name="Prescott A.M."/>
            <person name="Presecan E."/>
            <person name="Pujic P."/>
            <person name="Purnelle B."/>
            <person name="Rapoport G."/>
            <person name="Rey M."/>
            <person name="Reynolds S."/>
            <person name="Rieger M."/>
            <person name="Rivolta C."/>
            <person name="Rocha E."/>
            <person name="Roche B."/>
            <person name="Rose M."/>
            <person name="Sadaie Y."/>
            <person name="Sato T."/>
            <person name="Scanlan E."/>
            <person name="Schleich S."/>
            <person name="Schroeter R."/>
            <person name="Scoffone F."/>
            <person name="Sekiguchi J."/>
            <person name="Sekowska A."/>
            <person name="Seror S.J."/>
            <person name="Serror P."/>
            <person name="Shin B.-S."/>
            <person name="Soldo B."/>
            <person name="Sorokin A."/>
            <person name="Tacconi E."/>
            <person name="Takagi T."/>
            <person name="Takahashi H."/>
            <person name="Takemaru K."/>
            <person name="Takeuchi M."/>
            <person name="Tamakoshi A."/>
            <person name="Tanaka T."/>
            <person name="Terpstra P."/>
            <person name="Tognoni A."/>
            <person name="Tosato V."/>
            <person name="Uchiyama S."/>
            <person name="Vandenbol M."/>
            <person name="Vannier F."/>
            <person name="Vassarotti A."/>
            <person name="Viari A."/>
            <person name="Wambutt R."/>
            <person name="Wedler E."/>
            <person name="Wedler H."/>
            <person name="Weitzenegger T."/>
            <person name="Winters P."/>
            <person name="Wipat A."/>
            <person name="Yamamoto H."/>
            <person name="Yamane K."/>
            <person name="Yasumoto K."/>
            <person name="Yata K."/>
            <person name="Yoshida K."/>
            <person name="Yoshikawa H.-F."/>
            <person name="Zumstein E."/>
            <person name="Yoshikawa H."/>
            <person name="Danchin A."/>
        </authorList>
    </citation>
    <scope>NUCLEOTIDE SEQUENCE [LARGE SCALE GENOMIC DNA]</scope>
    <source>
        <strain>168</strain>
    </source>
</reference>
<reference key="4">
    <citation type="journal article" date="2005" name="Microbiol. Mol. Biol. Rev.">
        <title>The TetR family of transcriptional repressors.</title>
        <authorList>
            <person name="Ramos J.L."/>
            <person name="Martinez-Bueno M."/>
            <person name="Molina-Henares A.J."/>
            <person name="Teran W."/>
            <person name="Watanabe K."/>
            <person name="Zhang X."/>
            <person name="Gallegos M.T."/>
            <person name="Brennan R."/>
            <person name="Tobes R."/>
        </authorList>
    </citation>
    <scope>REVIEW</scope>
    <scope>GENE FAMILY</scope>
</reference>
<dbReference type="EMBL" id="M97208">
    <property type="protein sequence ID" value="AAA22520.1"/>
    <property type="molecule type" value="Genomic_DNA"/>
</dbReference>
<dbReference type="EMBL" id="Y14083">
    <property type="protein sequence ID" value="CAA74521.1"/>
    <property type="molecule type" value="Genomic_DNA"/>
</dbReference>
<dbReference type="EMBL" id="AL009126">
    <property type="protein sequence ID" value="CAB12855.1"/>
    <property type="molecule type" value="Genomic_DNA"/>
</dbReference>
<dbReference type="PIR" id="E47045">
    <property type="entry name" value="E47045"/>
</dbReference>
<dbReference type="RefSeq" id="NP_388896.1">
    <property type="nucleotide sequence ID" value="NC_000964.3"/>
</dbReference>
<dbReference type="RefSeq" id="WP_003233204.1">
    <property type="nucleotide sequence ID" value="NZ_OZ025638.1"/>
</dbReference>
<dbReference type="SMR" id="P32398"/>
<dbReference type="FunCoup" id="P32398">
    <property type="interactions" value="146"/>
</dbReference>
<dbReference type="STRING" id="224308.BSU10150"/>
<dbReference type="PaxDb" id="224308-BSU10150"/>
<dbReference type="DNASU" id="939305"/>
<dbReference type="EnsemblBacteria" id="CAB12855">
    <property type="protein sequence ID" value="CAB12855"/>
    <property type="gene ID" value="BSU_10150"/>
</dbReference>
<dbReference type="GeneID" id="939305"/>
<dbReference type="KEGG" id="bsu:BSU10150"/>
<dbReference type="PATRIC" id="fig|224308.179.peg.1091"/>
<dbReference type="eggNOG" id="COG1309">
    <property type="taxonomic scope" value="Bacteria"/>
</dbReference>
<dbReference type="InParanoid" id="P32398"/>
<dbReference type="OrthoDB" id="9812484at2"/>
<dbReference type="PhylomeDB" id="P32398"/>
<dbReference type="BioCyc" id="BSUB:BSU10150-MONOMER"/>
<dbReference type="Proteomes" id="UP000001570">
    <property type="component" value="Chromosome"/>
</dbReference>
<dbReference type="GO" id="GO:0003677">
    <property type="term" value="F:DNA binding"/>
    <property type="evidence" value="ECO:0007669"/>
    <property type="project" value="UniProtKB-KW"/>
</dbReference>
<dbReference type="Gene3D" id="1.10.357.10">
    <property type="entry name" value="Tetracycline Repressor, domain 2"/>
    <property type="match status" value="1"/>
</dbReference>
<dbReference type="InterPro" id="IPR023772">
    <property type="entry name" value="DNA-bd_HTH_TetR-type_CS"/>
</dbReference>
<dbReference type="InterPro" id="IPR009057">
    <property type="entry name" value="Homeodomain-like_sf"/>
</dbReference>
<dbReference type="InterPro" id="IPR050624">
    <property type="entry name" value="HTH-type_Tx_Regulator"/>
</dbReference>
<dbReference type="InterPro" id="IPR001647">
    <property type="entry name" value="HTH_TetR"/>
</dbReference>
<dbReference type="InterPro" id="IPR041490">
    <property type="entry name" value="KstR2_TetR_C"/>
</dbReference>
<dbReference type="InterPro" id="IPR036271">
    <property type="entry name" value="Tet_transcr_reg_TetR-rel_C_sf"/>
</dbReference>
<dbReference type="PANTHER" id="PTHR43479">
    <property type="entry name" value="ACREF/ENVCD OPERON REPRESSOR-RELATED"/>
    <property type="match status" value="1"/>
</dbReference>
<dbReference type="PANTHER" id="PTHR43479:SF11">
    <property type="entry name" value="ACREF_ENVCD OPERON REPRESSOR-RELATED"/>
    <property type="match status" value="1"/>
</dbReference>
<dbReference type="Pfam" id="PF17932">
    <property type="entry name" value="TetR_C_24"/>
    <property type="match status" value="1"/>
</dbReference>
<dbReference type="Pfam" id="PF00440">
    <property type="entry name" value="TetR_N"/>
    <property type="match status" value="1"/>
</dbReference>
<dbReference type="PRINTS" id="PR00455">
    <property type="entry name" value="HTHTETR"/>
</dbReference>
<dbReference type="SUPFAM" id="SSF46689">
    <property type="entry name" value="Homeodomain-like"/>
    <property type="match status" value="1"/>
</dbReference>
<dbReference type="SUPFAM" id="SSF48498">
    <property type="entry name" value="Tetracyclin repressor-like, C-terminal domain"/>
    <property type="match status" value="1"/>
</dbReference>
<dbReference type="PROSITE" id="PS01081">
    <property type="entry name" value="HTH_TETR_1"/>
    <property type="match status" value="1"/>
</dbReference>
<dbReference type="PROSITE" id="PS50977">
    <property type="entry name" value="HTH_TETR_2"/>
    <property type="match status" value="1"/>
</dbReference>
<gene>
    <name type="primary">yhgD</name>
    <name type="synonym">yixD</name>
    <name type="ordered locus">BSU10150</name>
</gene>
<organism>
    <name type="scientific">Bacillus subtilis (strain 168)</name>
    <dbReference type="NCBI Taxonomy" id="224308"/>
    <lineage>
        <taxon>Bacteria</taxon>
        <taxon>Bacillati</taxon>
        <taxon>Bacillota</taxon>
        <taxon>Bacilli</taxon>
        <taxon>Bacillales</taxon>
        <taxon>Bacillaceae</taxon>
        <taxon>Bacillus</taxon>
    </lineage>
</organism>
<protein>
    <recommendedName>
        <fullName>Uncharacterized HTH-type transcriptional regulator YhgD</fullName>
    </recommendedName>
</protein>
<accession>P32398</accession>
<proteinExistence type="predicted"/>
<evidence type="ECO:0000255" key="1">
    <source>
        <dbReference type="PROSITE-ProRule" id="PRU00335"/>
    </source>
</evidence>
<sequence length="191" mass="21794">MSIDRKKLILEAATKSFTQFGYKATTMDLVAKLANVGKGTIYTFFKNKEELFDEIFTTLLKEMKQKADEAMEPSLPFHENVHRALFAILEFRKTHQLTIKIFQENAEIGTMAVQEVIQKMERSILSYIKSKIEDGIKSGAIKPCDPELTAFVMLKLYIALIFDWEKQHPPLDKETIAGLLELYVVKGLSAN</sequence>
<keyword id="KW-0238">DNA-binding</keyword>
<keyword id="KW-1185">Reference proteome</keyword>
<keyword id="KW-0678">Repressor</keyword>
<keyword id="KW-0804">Transcription</keyword>
<keyword id="KW-0805">Transcription regulation</keyword>
<feature type="chain" id="PRO_0000070651" description="Uncharacterized HTH-type transcriptional regulator YhgD">
    <location>
        <begin position="1"/>
        <end position="191"/>
    </location>
</feature>
<feature type="domain" description="HTH tetR-type" evidence="1">
    <location>
        <begin position="3"/>
        <end position="63"/>
    </location>
</feature>
<feature type="DNA-binding region" description="H-T-H motif" evidence="1">
    <location>
        <begin position="26"/>
        <end position="45"/>
    </location>
</feature>